<proteinExistence type="evidence at protein level"/>
<protein>
    <recommendedName>
        <fullName>Dynein light chain Tctex-type 1</fullName>
    </recommendedName>
    <alternativeName>
        <fullName>Activator of G-protein signaling 2</fullName>
        <shortName>AGS2</shortName>
    </alternativeName>
    <alternativeName>
        <fullName>T-complex testis-specific protein 1</fullName>
    </alternativeName>
    <alternativeName>
        <fullName>TCTEX-1</fullName>
    </alternativeName>
</protein>
<gene>
    <name type="primary">Dynlt1</name>
    <name type="synonym">Tctel1</name>
    <name type="synonym">Tctex-1</name>
    <name type="synonym">Tctex1</name>
</gene>
<reference key="1">
    <citation type="journal article" date="1989" name="Cell">
        <title>tctex-1: a candidate gene family for a mouse t complex sterility locus.</title>
        <authorList>
            <person name="Lader E."/>
            <person name="Ha H.-S."/>
            <person name="O'Neill M."/>
            <person name="Artzt K."/>
            <person name="Bennett D."/>
        </authorList>
    </citation>
    <scope>NUCLEOTIDE SEQUENCE [MRNA]</scope>
    <source>
        <tissue>Testis</tissue>
    </source>
</reference>
<reference key="2">
    <citation type="journal article" date="2005" name="Science">
        <title>The transcriptional landscape of the mammalian genome.</title>
        <authorList>
            <person name="Carninci P."/>
            <person name="Kasukawa T."/>
            <person name="Katayama S."/>
            <person name="Gough J."/>
            <person name="Frith M.C."/>
            <person name="Maeda N."/>
            <person name="Oyama R."/>
            <person name="Ravasi T."/>
            <person name="Lenhard B."/>
            <person name="Wells C."/>
            <person name="Kodzius R."/>
            <person name="Shimokawa K."/>
            <person name="Bajic V.B."/>
            <person name="Brenner S.E."/>
            <person name="Batalov S."/>
            <person name="Forrest A.R."/>
            <person name="Zavolan M."/>
            <person name="Davis M.J."/>
            <person name="Wilming L.G."/>
            <person name="Aidinis V."/>
            <person name="Allen J.E."/>
            <person name="Ambesi-Impiombato A."/>
            <person name="Apweiler R."/>
            <person name="Aturaliya R.N."/>
            <person name="Bailey T.L."/>
            <person name="Bansal M."/>
            <person name="Baxter L."/>
            <person name="Beisel K.W."/>
            <person name="Bersano T."/>
            <person name="Bono H."/>
            <person name="Chalk A.M."/>
            <person name="Chiu K.P."/>
            <person name="Choudhary V."/>
            <person name="Christoffels A."/>
            <person name="Clutterbuck D.R."/>
            <person name="Crowe M.L."/>
            <person name="Dalla E."/>
            <person name="Dalrymple B.P."/>
            <person name="de Bono B."/>
            <person name="Della Gatta G."/>
            <person name="di Bernardo D."/>
            <person name="Down T."/>
            <person name="Engstrom P."/>
            <person name="Fagiolini M."/>
            <person name="Faulkner G."/>
            <person name="Fletcher C.F."/>
            <person name="Fukushima T."/>
            <person name="Furuno M."/>
            <person name="Futaki S."/>
            <person name="Gariboldi M."/>
            <person name="Georgii-Hemming P."/>
            <person name="Gingeras T.R."/>
            <person name="Gojobori T."/>
            <person name="Green R.E."/>
            <person name="Gustincich S."/>
            <person name="Harbers M."/>
            <person name="Hayashi Y."/>
            <person name="Hensch T.K."/>
            <person name="Hirokawa N."/>
            <person name="Hill D."/>
            <person name="Huminiecki L."/>
            <person name="Iacono M."/>
            <person name="Ikeo K."/>
            <person name="Iwama A."/>
            <person name="Ishikawa T."/>
            <person name="Jakt M."/>
            <person name="Kanapin A."/>
            <person name="Katoh M."/>
            <person name="Kawasawa Y."/>
            <person name="Kelso J."/>
            <person name="Kitamura H."/>
            <person name="Kitano H."/>
            <person name="Kollias G."/>
            <person name="Krishnan S.P."/>
            <person name="Kruger A."/>
            <person name="Kummerfeld S.K."/>
            <person name="Kurochkin I.V."/>
            <person name="Lareau L.F."/>
            <person name="Lazarevic D."/>
            <person name="Lipovich L."/>
            <person name="Liu J."/>
            <person name="Liuni S."/>
            <person name="McWilliam S."/>
            <person name="Madan Babu M."/>
            <person name="Madera M."/>
            <person name="Marchionni L."/>
            <person name="Matsuda H."/>
            <person name="Matsuzawa S."/>
            <person name="Miki H."/>
            <person name="Mignone F."/>
            <person name="Miyake S."/>
            <person name="Morris K."/>
            <person name="Mottagui-Tabar S."/>
            <person name="Mulder N."/>
            <person name="Nakano N."/>
            <person name="Nakauchi H."/>
            <person name="Ng P."/>
            <person name="Nilsson R."/>
            <person name="Nishiguchi S."/>
            <person name="Nishikawa S."/>
            <person name="Nori F."/>
            <person name="Ohara O."/>
            <person name="Okazaki Y."/>
            <person name="Orlando V."/>
            <person name="Pang K.C."/>
            <person name="Pavan W.J."/>
            <person name="Pavesi G."/>
            <person name="Pesole G."/>
            <person name="Petrovsky N."/>
            <person name="Piazza S."/>
            <person name="Reed J."/>
            <person name="Reid J.F."/>
            <person name="Ring B.Z."/>
            <person name="Ringwald M."/>
            <person name="Rost B."/>
            <person name="Ruan Y."/>
            <person name="Salzberg S.L."/>
            <person name="Sandelin A."/>
            <person name="Schneider C."/>
            <person name="Schoenbach C."/>
            <person name="Sekiguchi K."/>
            <person name="Semple C.A."/>
            <person name="Seno S."/>
            <person name="Sessa L."/>
            <person name="Sheng Y."/>
            <person name="Shibata Y."/>
            <person name="Shimada H."/>
            <person name="Shimada K."/>
            <person name="Silva D."/>
            <person name="Sinclair B."/>
            <person name="Sperling S."/>
            <person name="Stupka E."/>
            <person name="Sugiura K."/>
            <person name="Sultana R."/>
            <person name="Takenaka Y."/>
            <person name="Taki K."/>
            <person name="Tammoja K."/>
            <person name="Tan S.L."/>
            <person name="Tang S."/>
            <person name="Taylor M.S."/>
            <person name="Tegner J."/>
            <person name="Teichmann S.A."/>
            <person name="Ueda H.R."/>
            <person name="van Nimwegen E."/>
            <person name="Verardo R."/>
            <person name="Wei C.L."/>
            <person name="Yagi K."/>
            <person name="Yamanishi H."/>
            <person name="Zabarovsky E."/>
            <person name="Zhu S."/>
            <person name="Zimmer A."/>
            <person name="Hide W."/>
            <person name="Bult C."/>
            <person name="Grimmond S.M."/>
            <person name="Teasdale R.D."/>
            <person name="Liu E.T."/>
            <person name="Brusic V."/>
            <person name="Quackenbush J."/>
            <person name="Wahlestedt C."/>
            <person name="Mattick J.S."/>
            <person name="Hume D.A."/>
            <person name="Kai C."/>
            <person name="Sasaki D."/>
            <person name="Tomaru Y."/>
            <person name="Fukuda S."/>
            <person name="Kanamori-Katayama M."/>
            <person name="Suzuki M."/>
            <person name="Aoki J."/>
            <person name="Arakawa T."/>
            <person name="Iida J."/>
            <person name="Imamura K."/>
            <person name="Itoh M."/>
            <person name="Kato T."/>
            <person name="Kawaji H."/>
            <person name="Kawagashira N."/>
            <person name="Kawashima T."/>
            <person name="Kojima M."/>
            <person name="Kondo S."/>
            <person name="Konno H."/>
            <person name="Nakano K."/>
            <person name="Ninomiya N."/>
            <person name="Nishio T."/>
            <person name="Okada M."/>
            <person name="Plessy C."/>
            <person name="Shibata K."/>
            <person name="Shiraki T."/>
            <person name="Suzuki S."/>
            <person name="Tagami M."/>
            <person name="Waki K."/>
            <person name="Watahiki A."/>
            <person name="Okamura-Oho Y."/>
            <person name="Suzuki H."/>
            <person name="Kawai J."/>
            <person name="Hayashizaki Y."/>
        </authorList>
    </citation>
    <scope>NUCLEOTIDE SEQUENCE [LARGE SCALE MRNA]</scope>
    <source>
        <strain>C57BL/6J</strain>
        <strain>NOD</strain>
        <tissue>Liver</tissue>
        <tissue>Thymus</tissue>
    </source>
</reference>
<reference key="3">
    <citation type="journal article" date="2004" name="Genome Res.">
        <title>The status, quality, and expansion of the NIH full-length cDNA project: the Mammalian Gene Collection (MGC).</title>
        <authorList>
            <consortium name="The MGC Project Team"/>
        </authorList>
    </citation>
    <scope>NUCLEOTIDE SEQUENCE [LARGE SCALE MRNA]</scope>
    <source>
        <strain>C57BL/6J</strain>
        <tissue>Brain</tissue>
        <tissue>Testis</tissue>
    </source>
</reference>
<reference key="4">
    <citation type="journal article" date="1998" name="J. Cell Biol.">
        <title>Identification of the t complex-encoded cytoplasmic dynein light chain tctex1 in inner arm I1 supports the involvement of flagellar dyneins in meiotic drive.</title>
        <authorList>
            <person name="Harrison A."/>
            <person name="Olds-Clarke P."/>
            <person name="King S.M."/>
        </authorList>
    </citation>
    <scope>TISSUE SPECIFICITY</scope>
    <scope>POSSIBLE FUNCTION IN AXONEMAL DYNEIN</scope>
</reference>
<reference key="5">
    <citation type="journal article" date="1999" name="J. Biol. Chem.">
        <title>Receptor-independent activators of heterotrimeric G-protein signaling pathways.</title>
        <authorList>
            <person name="Takesono A."/>
            <person name="Cismowski M.J."/>
            <person name="Ribas C."/>
            <person name="Bernard M."/>
            <person name="Chung P."/>
            <person name="Hazard S. III"/>
            <person name="Duzic E."/>
            <person name="Lanier S.M."/>
        </authorList>
    </citation>
    <scope>FUNCTION IN RECEPTOR-INDEPENDENT ACTIVATION OF G-PROTEIN SIGNALING</scope>
    <scope>ASSOCIATION WITH GBETA-GAMMA</scope>
</reference>
<reference key="6">
    <citation type="journal article" date="2001" name="J. Biol. Chem.">
        <title>Structure of Tctex-1 and its interaction with cytoplasmic dynein intermediate chain.</title>
        <authorList>
            <person name="Mok Y.K."/>
            <person name="Lo K.W."/>
            <person name="Zhang M."/>
        </authorList>
    </citation>
    <scope>INTERACTION WITH DYNC1I1</scope>
    <scope>SUBUNIT</scope>
</reference>
<reference key="7">
    <citation type="journal article" date="2001" name="J. Biol. Chem.">
        <title>The Tctex1/Tctex2 class of dynein light chains. Dimerization, differential expression, and interaction with the LC8 protein family.</title>
        <authorList>
            <person name="DiBella L.M."/>
            <person name="Benashski S.E."/>
            <person name="Tedford H.W."/>
            <person name="Harrison A."/>
            <person name="Patel-King R.S."/>
            <person name="King S.M."/>
        </authorList>
    </citation>
    <scope>SELF-ASSOCIATION</scope>
</reference>
<reference key="8">
    <citation type="journal article" date="2009" name="Nat. Neurosci.">
        <title>Lfc and Tctex-1 regulate the genesis of neurons from cortical precursor cells.</title>
        <authorList>
            <person name="Gauthier-Fisher A."/>
            <person name="Lin D.C."/>
            <person name="Greeve M."/>
            <person name="Kaplan D.R."/>
            <person name="Rottapel R."/>
            <person name="Miller F.D."/>
        </authorList>
    </citation>
    <scope>FUNCTION IN NEUROGENESIS</scope>
</reference>
<reference key="9">
    <citation type="journal article" date="2010" name="Cell">
        <title>A tissue-specific atlas of mouse protein phosphorylation and expression.</title>
        <authorList>
            <person name="Huttlin E.L."/>
            <person name="Jedrychowski M.P."/>
            <person name="Elias J.E."/>
            <person name="Goswami T."/>
            <person name="Rad R."/>
            <person name="Beausoleil S.A."/>
            <person name="Villen J."/>
            <person name="Haas W."/>
            <person name="Sowa M.E."/>
            <person name="Gygi S.P."/>
        </authorList>
    </citation>
    <scope>IDENTIFICATION BY MASS SPECTROMETRY [LARGE SCALE ANALYSIS]</scope>
    <source>
        <tissue>Brain</tissue>
        <tissue>Brown adipose tissue</tissue>
        <tissue>Heart</tissue>
        <tissue>Kidney</tissue>
        <tissue>Liver</tissue>
        <tissue>Lung</tissue>
        <tissue>Pancreas</tissue>
        <tissue>Spleen</tissue>
        <tissue>Testis</tissue>
    </source>
</reference>
<reference key="10">
    <citation type="journal article" date="2016" name="J. Biol. Chem.">
        <title>Molecular basis for the protein recognition specificity of the dynein light chain DYNLT1/Tctex1: characterization of the interaction with activin receptor IIB.</title>
        <authorList>
            <person name="Merino-Gracia J."/>
            <person name="Zamora-Carreras H."/>
            <person name="Bruix M."/>
            <person name="Rodriguez-Crespo I."/>
        </authorList>
    </citation>
    <scope>INTERACTION WITH DYNC1I2 AND DYNC1I2</scope>
</reference>
<reference key="11">
    <citation type="journal article" date="2019" name="J. Mol. Cell Biol.">
        <title>Vertebrate Dynein-f depends on Wdr78 for axonemal localization and is essential for ciliary beat.</title>
        <authorList>
            <person name="Zhang Y."/>
            <person name="Chen Y."/>
            <person name="Zheng J."/>
            <person name="Wang J."/>
            <person name="Duan S."/>
            <person name="Zhang W."/>
            <person name="Yan X."/>
            <person name="Zhu X."/>
        </authorList>
    </citation>
    <scope>INTERACTION WITH DNAI4</scope>
</reference>
<reference key="12">
    <citation type="journal article" date="2021" name="Development">
        <title>CFAP61 is required for sperm flagellum formation and male fertility in human and mouse.</title>
        <authorList>
            <person name="Liu S."/>
            <person name="Zhang J."/>
            <person name="Kherraf Z.E."/>
            <person name="Sun S."/>
            <person name="Zhang X."/>
            <person name="Cazin C."/>
            <person name="Coutton C."/>
            <person name="Zouari R."/>
            <person name="Zhao S."/>
            <person name="Hu F."/>
            <person name="Fourati Ben Mustapha S."/>
            <person name="Arnoult C."/>
            <person name="Ray P.F."/>
            <person name="Liu M."/>
        </authorList>
    </citation>
    <scope>INTERACTION WITH CFAP61</scope>
</reference>
<organism>
    <name type="scientific">Mus musculus</name>
    <name type="common">Mouse</name>
    <dbReference type="NCBI Taxonomy" id="10090"/>
    <lineage>
        <taxon>Eukaryota</taxon>
        <taxon>Metazoa</taxon>
        <taxon>Chordata</taxon>
        <taxon>Craniata</taxon>
        <taxon>Vertebrata</taxon>
        <taxon>Euteleostomi</taxon>
        <taxon>Mammalia</taxon>
        <taxon>Eutheria</taxon>
        <taxon>Euarchontoglires</taxon>
        <taxon>Glires</taxon>
        <taxon>Rodentia</taxon>
        <taxon>Myomorpha</taxon>
        <taxon>Muroidea</taxon>
        <taxon>Muridae</taxon>
        <taxon>Murinae</taxon>
        <taxon>Mus</taxon>
        <taxon>Mus</taxon>
    </lineage>
</organism>
<comment type="function">
    <text evidence="1 8">Acts as one of several non-catalytic accessory components of the cytoplasmic dynein 1 complex that are thought to be involved in linking dynein to cargos and to adapter proteins that regulate dynein function. Cytoplasmic dynein 1 acts as a motor for the intracellular retrograde motility of vesicles and organelles along microtubules. Binds to transport cargos and is involved in apical cargo transport such as rhodopsin-bearing vesicles in polarized epithelia (By similarity). May also be a accessory component of axonemal dynein. Plays an important role in male germ cell development and function. Candidate for involvement in male sterility.</text>
</comment>
<comment type="function">
    <text evidence="3 4">Plays a role in neuronal morphogenesis; the function is independent of cytoplasmic dynein and seems to be coupled to regulation of the actin cytoskeleton by enhancing Rac1 activity. The function in neurogenesis may be regulated by association with a G-protein beta-gamma dimer. May function as a receptor-independent activator of heterotrimeric G-protein signaling; the activation appears to be independent of a nucleotide exchange. Plays a role in regulating neurogenesis; inhibits the genesis of neurons from precursor cells during cortical development presumably by antagonizing ARHGEF2. Unrelated to the role in retrograde microtubule-associated movement may play a role in the dimerization of cytoplasmic proteins/domains such as for ACVR2B. Binds to the cytoplasmic domain of ACVR2B and, in vitro, inhibits ACVR2B signaling. Involved in the regulation of mitotic spindle orientation.</text>
</comment>
<comment type="subunit">
    <text evidence="1 2 5 6 7 9">Homodimer (Probable). The cytoplasmic dynein 1 complex consists of two catalytic heavy chains (HCs) and a number of non-catalytic subunits presented by intermediate chains (ICs), light intermediate chains (LICs) and light chains (LCs); the composition seems to vary in respect to the IC, LIC and LC composition. The heavy chain homodimer serves as a scaffold for the probable homodimeric assembly of the respective non-catalytic subunits. The ICs and LICs bind directly to the HC dimer and the LCs assemble on the IC dimer. DYNLT1 and DYNLT3 compete for association with dynein IC (DYNC1I1 or DYNC1I2). Self-associates. Interacts with RHO (By similarity). Interacts with DYNC1I1 and DYNC1I2. Interacts with DOC2A, DOC2B and SCN10A. Interacts with PVR. Interacts with SVIL isoform 2. Interacts with GNB1; the interaction occurs in presence of guanine nucleotide-binding protein G(T) subunit gamma; the interaction diminishes the association of DYNLT1 with dynein IC (DYNC1I1 or DYNC1I2). Interacts with GNB2, GNB3 and GNB5; the interactions occur in presence of guanine nucleotide-binding protein G(T) subunit gamma. Interacts with ACVR2B and ARHGEF2 (By similarity). Interacts with DNAI4 (PubMed:30060180). Interacts with CFAP61 (PubMed:34792097).</text>
</comment>
<comment type="interaction">
    <interactant intactId="EBI-642797">
        <id>P51807</id>
    </interactant>
    <interactant intactId="EBI-524514">
        <id>P39688</id>
        <label>Fyn</label>
    </interactant>
    <organismsDiffer>false</organismsDiffer>
    <experiments>3</experiments>
</comment>
<comment type="interaction">
    <interactant intactId="EBI-642797">
        <id>P51807</id>
    </interactant>
    <interactant intactId="EBI-6995105">
        <id>O46385</id>
        <label>SVIL</label>
    </interactant>
    <organismsDiffer>true</organismsDiffer>
    <experiments>4</experiments>
</comment>
<comment type="subcellular location">
    <subcellularLocation>
        <location evidence="1">Golgi apparatus</location>
    </subcellularLocation>
    <subcellularLocation>
        <location evidence="1">Cytoplasm</location>
    </subcellularLocation>
    <subcellularLocation>
        <location evidence="1">Cytoplasm</location>
        <location evidence="1">Cytoskeleton</location>
        <location evidence="1">Spindle</location>
    </subcellularLocation>
    <text evidence="1">Localizes to mitotic spindles.</text>
</comment>
<comment type="tissue specificity">
    <text evidence="8">High level in testis (germ cell-specific). Expressed in sperm (at protein level). 200-fold lower in liver, brain, heart, spleen, and kidney. Levels in thymus and two embryonal carcinoma cell lines were several-fold higher than this low constitutive level.</text>
</comment>
<comment type="developmental stage">
    <text>First abundantly expressed at the pachytene stage of meiosis and persists throughout spermatogenesis.</text>
</comment>
<comment type="PTM">
    <text evidence="1">Phosphorylated by BMPR2. The phosphorylation status is proposed to regulate the association with the cytoplasmic dynein complex and may have role in cytoplasmic dynein cargo release (By similarity).</text>
</comment>
<comment type="similarity">
    <text evidence="9">Belongs to the dynein light chain Tctex-type family.</text>
</comment>
<feature type="chain" id="PRO_0000195153" description="Dynein light chain Tctex-type 1">
    <location>
        <begin position="1"/>
        <end position="113"/>
    </location>
</feature>
<feature type="region of interest" description="Interaction with GNB1" evidence="1">
    <location>
        <begin position="41"/>
        <end position="113"/>
    </location>
</feature>
<feature type="modified residue" description="N-acetylmethionine" evidence="2">
    <location>
        <position position="1"/>
    </location>
</feature>
<feature type="sequence variant">
    <original>V</original>
    <variation>A</variation>
    <location>
        <position position="21"/>
    </location>
</feature>
<feature type="helix" evidence="10">
    <location>
        <begin position="14"/>
        <end position="29"/>
    </location>
</feature>
<feature type="helix" evidence="10">
    <location>
        <begin position="36"/>
        <end position="38"/>
    </location>
</feature>
<feature type="helix" evidence="10">
    <location>
        <begin position="39"/>
        <end position="55"/>
    </location>
</feature>
<feature type="strand" evidence="10">
    <location>
        <begin position="60"/>
        <end position="71"/>
    </location>
</feature>
<feature type="strand" evidence="10">
    <location>
        <begin position="77"/>
        <end position="85"/>
    </location>
</feature>
<feature type="turn" evidence="10">
    <location>
        <begin position="87"/>
        <end position="89"/>
    </location>
</feature>
<feature type="strand" evidence="10">
    <location>
        <begin position="91"/>
        <end position="98"/>
    </location>
</feature>
<feature type="strand" evidence="10">
    <location>
        <begin position="100"/>
        <end position="112"/>
    </location>
</feature>
<evidence type="ECO:0000250" key="1"/>
<evidence type="ECO:0000250" key="2">
    <source>
        <dbReference type="UniProtKB" id="P63172"/>
    </source>
</evidence>
<evidence type="ECO:0000269" key="3">
    <source>
    </source>
</evidence>
<evidence type="ECO:0000269" key="4">
    <source>
    </source>
</evidence>
<evidence type="ECO:0000269" key="5">
    <source>
    </source>
</evidence>
<evidence type="ECO:0000269" key="6">
    <source>
    </source>
</evidence>
<evidence type="ECO:0000269" key="7">
    <source>
    </source>
</evidence>
<evidence type="ECO:0000269" key="8">
    <source>
    </source>
</evidence>
<evidence type="ECO:0000305" key="9"/>
<evidence type="ECO:0007829" key="10">
    <source>
        <dbReference type="PDB" id="5WI4"/>
    </source>
</evidence>
<keyword id="KW-0002">3D-structure</keyword>
<keyword id="KW-0007">Acetylation</keyword>
<keyword id="KW-0131">Cell cycle</keyword>
<keyword id="KW-0132">Cell division</keyword>
<keyword id="KW-0963">Cytoplasm</keyword>
<keyword id="KW-0206">Cytoskeleton</keyword>
<keyword id="KW-0243">Dynein</keyword>
<keyword id="KW-0333">Golgi apparatus</keyword>
<keyword id="KW-0493">Microtubule</keyword>
<keyword id="KW-0498">Mitosis</keyword>
<keyword id="KW-0505">Motor protein</keyword>
<keyword id="KW-0524">Neurogenesis</keyword>
<keyword id="KW-0597">Phosphoprotein</keyword>
<keyword id="KW-1185">Reference proteome</keyword>
<keyword id="KW-0813">Transport</keyword>
<accession>P51807</accession>
<accession>Q5M8S6</accession>
<sequence>MEDFQASEETAFVVDEVSSIVKEAIESAIGGNAYQHSKVNQWTTNVLEQTLSQLTKLGRPFKYIVTCVIMQKNGAGLHSASSCFWDSSTDGSCTVRWENKTMYCIVSTFGLSI</sequence>
<dbReference type="EMBL" id="M25825">
    <property type="protein sequence ID" value="AAA40408.1"/>
    <property type="molecule type" value="mRNA"/>
</dbReference>
<dbReference type="EMBL" id="AK133788">
    <property type="protein sequence ID" value="BAE21842.1"/>
    <property type="molecule type" value="mRNA"/>
</dbReference>
<dbReference type="EMBL" id="AK153971">
    <property type="protein sequence ID" value="BAE32288.1"/>
    <property type="molecule type" value="mRNA"/>
</dbReference>
<dbReference type="EMBL" id="AK168478">
    <property type="protein sequence ID" value="BAE40367.1"/>
    <property type="molecule type" value="mRNA"/>
</dbReference>
<dbReference type="EMBL" id="BC043018">
    <property type="protein sequence ID" value="AAH43018.1"/>
    <property type="molecule type" value="mRNA"/>
</dbReference>
<dbReference type="EMBL" id="BC087868">
    <property type="protein sequence ID" value="AAH87868.1"/>
    <property type="molecule type" value="mRNA"/>
</dbReference>
<dbReference type="CCDS" id="CCDS49936.1"/>
<dbReference type="PIR" id="A32995">
    <property type="entry name" value="A32995"/>
</dbReference>
<dbReference type="RefSeq" id="NP_001160101.1">
    <property type="nucleotide sequence ID" value="NM_001166629.2"/>
</dbReference>
<dbReference type="RefSeq" id="NP_033368.1">
    <property type="nucleotide sequence ID" value="NM_009342.2"/>
</dbReference>
<dbReference type="RefSeq" id="XP_017172676.1">
    <property type="nucleotide sequence ID" value="XM_017317187.1"/>
</dbReference>
<dbReference type="PDB" id="5WI4">
    <property type="method" value="X-ray"/>
    <property type="resolution" value="2.00 A"/>
    <property type="chains" value="A/B/C=1-113"/>
</dbReference>
<dbReference type="PDBsum" id="5WI4"/>
<dbReference type="SMR" id="P51807"/>
<dbReference type="BioGRID" id="204082">
    <property type="interactions" value="27"/>
</dbReference>
<dbReference type="ComplexPortal" id="CPX-5699">
    <property type="entry name" value="Cytoplasmic dynein complex, variant 1"/>
</dbReference>
<dbReference type="FunCoup" id="P51807">
    <property type="interactions" value="842"/>
</dbReference>
<dbReference type="IntAct" id="P51807">
    <property type="interactions" value="10"/>
</dbReference>
<dbReference type="MINT" id="P51807"/>
<dbReference type="STRING" id="10090.ENSMUSP00000090644"/>
<dbReference type="iPTMnet" id="P51807"/>
<dbReference type="PhosphoSitePlus" id="P51807"/>
<dbReference type="jPOST" id="P51807"/>
<dbReference type="PaxDb" id="10090-ENSMUSP00000090644"/>
<dbReference type="ProteomicsDB" id="277618"/>
<dbReference type="Pumba" id="P51807"/>
<dbReference type="DNASU" id="21648"/>
<dbReference type="Ensembl" id="ENSMUST00000092966.5">
    <property type="protein sequence ID" value="ENSMUSP00000090644.5"/>
    <property type="gene ID" value="ENSMUSG00000000579.15"/>
</dbReference>
<dbReference type="Ensembl" id="ENSMUST00000169415.3">
    <property type="protein sequence ID" value="ENSMUSP00000127990.2"/>
    <property type="gene ID" value="ENSMUSG00000092074.3"/>
</dbReference>
<dbReference type="Ensembl" id="ENSMUST00000179554.3">
    <property type="protein sequence ID" value="ENSMUSP00000135978.2"/>
    <property type="gene ID" value="ENSMUSG00000095677.3"/>
</dbReference>
<dbReference type="Ensembl" id="ENSMUST00000179569.3">
    <property type="protein sequence ID" value="ENSMUSP00000137171.2"/>
    <property type="gene ID" value="ENSMUSG00000096255.3"/>
</dbReference>
<dbReference type="GeneID" id="100040531"/>
<dbReference type="GeneID" id="100040563"/>
<dbReference type="GeneID" id="100310872"/>
<dbReference type="GeneID" id="21648"/>
<dbReference type="KEGG" id="mmu:100040531"/>
<dbReference type="KEGG" id="mmu:100040563"/>
<dbReference type="KEGG" id="mmu:100310872"/>
<dbReference type="KEGG" id="mmu:21648"/>
<dbReference type="UCSC" id="uc008agl.3">
    <property type="organism name" value="mouse"/>
</dbReference>
<dbReference type="AGR" id="MGI:98643"/>
<dbReference type="CTD" id="100040531"/>
<dbReference type="CTD" id="100040563"/>
<dbReference type="CTD" id="100310872"/>
<dbReference type="CTD" id="21648"/>
<dbReference type="MGI" id="MGI:98643">
    <property type="gene designation" value="Dynlt1"/>
</dbReference>
<dbReference type="VEuPathDB" id="HostDB:ENSMUSG00000000579"/>
<dbReference type="VEuPathDB" id="HostDB:ENSMUSG00000092074"/>
<dbReference type="VEuPathDB" id="HostDB:ENSMUSG00000095677"/>
<dbReference type="VEuPathDB" id="HostDB:ENSMUSG00000096255"/>
<dbReference type="eggNOG" id="KOG4081">
    <property type="taxonomic scope" value="Eukaryota"/>
</dbReference>
<dbReference type="GeneTree" id="ENSGT00940000154531"/>
<dbReference type="HOGENOM" id="CLU_097204_7_2_1"/>
<dbReference type="InParanoid" id="P51807"/>
<dbReference type="OMA" id="VNQWTSA"/>
<dbReference type="OrthoDB" id="10059120at2759"/>
<dbReference type="PhylomeDB" id="P51807"/>
<dbReference type="TreeFam" id="TF313904"/>
<dbReference type="Reactome" id="R-MMU-6798695">
    <property type="pathway name" value="Neutrophil degranulation"/>
</dbReference>
<dbReference type="BioGRID-ORCS" id="100040531">
    <property type="hits" value="8 hits in 37 CRISPR screens"/>
</dbReference>
<dbReference type="BioGRID-ORCS" id="100040563">
    <property type="hits" value="7 hits in 37 CRISPR screens"/>
</dbReference>
<dbReference type="BioGRID-ORCS" id="100310872">
    <property type="hits" value="7 hits in 35 CRISPR screens"/>
</dbReference>
<dbReference type="BioGRID-ORCS" id="21648">
    <property type="hits" value="5 hits in 36 CRISPR screens"/>
</dbReference>
<dbReference type="ChiTaRS" id="Dynlt1c">
    <property type="organism name" value="mouse"/>
</dbReference>
<dbReference type="PRO" id="PR:P51807"/>
<dbReference type="Proteomes" id="UP000000589">
    <property type="component" value="Chromosome 17"/>
</dbReference>
<dbReference type="RNAct" id="P51807">
    <property type="molecule type" value="protein"/>
</dbReference>
<dbReference type="Bgee" id="ENSMUSG00000000579">
    <property type="expression patterns" value="Expressed in hypothalamus and 64 other cell types or tissues"/>
</dbReference>
<dbReference type="ExpressionAtlas" id="P51807">
    <property type="expression patterns" value="baseline and differential"/>
</dbReference>
<dbReference type="GO" id="GO:0005868">
    <property type="term" value="C:cytoplasmic dynein complex"/>
    <property type="evidence" value="ECO:0000250"/>
    <property type="project" value="UniProtKB"/>
</dbReference>
<dbReference type="GO" id="GO:0030286">
    <property type="term" value="C:dynein complex"/>
    <property type="evidence" value="ECO:0000266"/>
    <property type="project" value="ComplexPortal"/>
</dbReference>
<dbReference type="GO" id="GO:0005794">
    <property type="term" value="C:Golgi apparatus"/>
    <property type="evidence" value="ECO:0000314"/>
    <property type="project" value="MGI"/>
</dbReference>
<dbReference type="GO" id="GO:0030426">
    <property type="term" value="C:growth cone"/>
    <property type="evidence" value="ECO:0000314"/>
    <property type="project" value="MGI"/>
</dbReference>
<dbReference type="GO" id="GO:0005874">
    <property type="term" value="C:microtubule"/>
    <property type="evidence" value="ECO:0007669"/>
    <property type="project" value="UniProtKB-KW"/>
</dbReference>
<dbReference type="GO" id="GO:0043025">
    <property type="term" value="C:neuronal cell body"/>
    <property type="evidence" value="ECO:0000314"/>
    <property type="project" value="MGI"/>
</dbReference>
<dbReference type="GO" id="GO:0001917">
    <property type="term" value="C:photoreceptor inner segment"/>
    <property type="evidence" value="ECO:0000314"/>
    <property type="project" value="UniProtKB"/>
</dbReference>
<dbReference type="GO" id="GO:0005819">
    <property type="term" value="C:spindle"/>
    <property type="evidence" value="ECO:0007669"/>
    <property type="project" value="UniProtKB-SubCell"/>
</dbReference>
<dbReference type="GO" id="GO:0031681">
    <property type="term" value="F:G-protein beta-subunit binding"/>
    <property type="evidence" value="ECO:0000314"/>
    <property type="project" value="MGI"/>
</dbReference>
<dbReference type="GO" id="GO:0030742">
    <property type="term" value="F:GTP-dependent protein binding"/>
    <property type="evidence" value="ECO:0000353"/>
    <property type="project" value="MGI"/>
</dbReference>
<dbReference type="GO" id="GO:0051301">
    <property type="term" value="P:cell division"/>
    <property type="evidence" value="ECO:0007669"/>
    <property type="project" value="UniProtKB-KW"/>
</dbReference>
<dbReference type="GO" id="GO:0000132">
    <property type="term" value="P:establishment of mitotic spindle orientation"/>
    <property type="evidence" value="ECO:0000315"/>
    <property type="project" value="UniProtKB"/>
</dbReference>
<dbReference type="GO" id="GO:0070373">
    <property type="term" value="P:negative regulation of ERK1 and ERK2 cascade"/>
    <property type="evidence" value="ECO:0000314"/>
    <property type="project" value="MGI"/>
</dbReference>
<dbReference type="GO" id="GO:0050768">
    <property type="term" value="P:negative regulation of neurogenesis"/>
    <property type="evidence" value="ECO:0000315"/>
    <property type="project" value="UniProtKB"/>
</dbReference>
<dbReference type="GO" id="GO:0007399">
    <property type="term" value="P:nervous system development"/>
    <property type="evidence" value="ECO:0007669"/>
    <property type="project" value="UniProtKB-KW"/>
</dbReference>
<dbReference type="GO" id="GO:0010976">
    <property type="term" value="P:positive regulation of neuron projection development"/>
    <property type="evidence" value="ECO:0000315"/>
    <property type="project" value="MGI"/>
</dbReference>
<dbReference type="GO" id="GO:0008277">
    <property type="term" value="P:regulation of G protein-coupled receptor signaling pathway"/>
    <property type="evidence" value="ECO:0000315"/>
    <property type="project" value="UniProtKB"/>
</dbReference>
<dbReference type="CDD" id="cd21462">
    <property type="entry name" value="DLC-like_DYNLT1"/>
    <property type="match status" value="1"/>
</dbReference>
<dbReference type="FunFam" id="3.30.1140.40:FF:000001">
    <property type="entry name" value="Dynein light chain Tctex-type 1"/>
    <property type="match status" value="1"/>
</dbReference>
<dbReference type="Gene3D" id="3.30.1140.40">
    <property type="entry name" value="Tctex-1"/>
    <property type="match status" value="1"/>
</dbReference>
<dbReference type="InterPro" id="IPR005334">
    <property type="entry name" value="Tctex-1-like"/>
</dbReference>
<dbReference type="InterPro" id="IPR038586">
    <property type="entry name" value="Tctex-1-like_sf"/>
</dbReference>
<dbReference type="PANTHER" id="PTHR21255:SF19">
    <property type="entry name" value="DYNEIN LIGHT CHAIN TCTEX-TYPE 1"/>
    <property type="match status" value="1"/>
</dbReference>
<dbReference type="PANTHER" id="PTHR21255">
    <property type="entry name" value="T-COMPLEX-ASSOCIATED-TESTIS-EXPRESSED 1/ DYNEIN LIGHT CHAIN"/>
    <property type="match status" value="1"/>
</dbReference>
<dbReference type="Pfam" id="PF03645">
    <property type="entry name" value="Tctex-1"/>
    <property type="match status" value="1"/>
</dbReference>
<name>DYLT1_MOUSE</name>